<evidence type="ECO:0000255" key="1">
    <source>
        <dbReference type="HAMAP-Rule" id="MF_00116"/>
    </source>
</evidence>
<gene>
    <name evidence="1" type="primary">dut</name>
    <name type="ordered locus">Tery_2083</name>
</gene>
<keyword id="KW-0378">Hydrolase</keyword>
<keyword id="KW-0460">Magnesium</keyword>
<keyword id="KW-0479">Metal-binding</keyword>
<keyword id="KW-0546">Nucleotide metabolism</keyword>
<protein>
    <recommendedName>
        <fullName evidence="1">Deoxyuridine 5'-triphosphate nucleotidohydrolase</fullName>
        <shortName evidence="1">dUTPase</shortName>
        <ecNumber evidence="1">3.6.1.23</ecNumber>
    </recommendedName>
    <alternativeName>
        <fullName evidence="1">dUTP pyrophosphatase</fullName>
    </alternativeName>
</protein>
<name>DUT_TRIEI</name>
<reference key="1">
    <citation type="journal article" date="2015" name="Proc. Natl. Acad. Sci. U.S.A.">
        <title>Trichodesmium genome maintains abundant, widespread noncoding DNA in situ, despite oligotrophic lifestyle.</title>
        <authorList>
            <person name="Walworth N."/>
            <person name="Pfreundt U."/>
            <person name="Nelson W.C."/>
            <person name="Mincer T."/>
            <person name="Heidelberg J.F."/>
            <person name="Fu F."/>
            <person name="Waterbury J.B."/>
            <person name="Glavina del Rio T."/>
            <person name="Goodwin L."/>
            <person name="Kyrpides N.C."/>
            <person name="Land M.L."/>
            <person name="Woyke T."/>
            <person name="Hutchins D.A."/>
            <person name="Hess W.R."/>
            <person name="Webb E.A."/>
        </authorList>
    </citation>
    <scope>NUCLEOTIDE SEQUENCE [LARGE SCALE GENOMIC DNA]</scope>
    <source>
        <strain>IMS101</strain>
    </source>
</reference>
<accession>Q113K0</accession>
<organism>
    <name type="scientific">Trichodesmium erythraeum (strain IMS101)</name>
    <dbReference type="NCBI Taxonomy" id="203124"/>
    <lineage>
        <taxon>Bacteria</taxon>
        <taxon>Bacillati</taxon>
        <taxon>Cyanobacteriota</taxon>
        <taxon>Cyanophyceae</taxon>
        <taxon>Oscillatoriophycideae</taxon>
        <taxon>Oscillatoriales</taxon>
        <taxon>Microcoleaceae</taxon>
        <taxon>Trichodesmium</taxon>
    </lineage>
</organism>
<proteinExistence type="inferred from homology"/>
<comment type="function">
    <text evidence="1">This enzyme is involved in nucleotide metabolism: it produces dUMP, the immediate precursor of thymidine nucleotides and it decreases the intracellular concentration of dUTP so that uracil cannot be incorporated into DNA.</text>
</comment>
<comment type="catalytic activity">
    <reaction evidence="1">
        <text>dUTP + H2O = dUMP + diphosphate + H(+)</text>
        <dbReference type="Rhea" id="RHEA:10248"/>
        <dbReference type="ChEBI" id="CHEBI:15377"/>
        <dbReference type="ChEBI" id="CHEBI:15378"/>
        <dbReference type="ChEBI" id="CHEBI:33019"/>
        <dbReference type="ChEBI" id="CHEBI:61555"/>
        <dbReference type="ChEBI" id="CHEBI:246422"/>
        <dbReference type="EC" id="3.6.1.23"/>
    </reaction>
</comment>
<comment type="cofactor">
    <cofactor evidence="1">
        <name>Mg(2+)</name>
        <dbReference type="ChEBI" id="CHEBI:18420"/>
    </cofactor>
</comment>
<comment type="pathway">
    <text evidence="1">Pyrimidine metabolism; dUMP biosynthesis; dUMP from dCTP (dUTP route): step 2/2.</text>
</comment>
<comment type="similarity">
    <text evidence="1">Belongs to the dUTPase family.</text>
</comment>
<dbReference type="EC" id="3.6.1.23" evidence="1"/>
<dbReference type="EMBL" id="CP000393">
    <property type="protein sequence ID" value="ABG51324.1"/>
    <property type="molecule type" value="Genomic_DNA"/>
</dbReference>
<dbReference type="RefSeq" id="WP_011611695.1">
    <property type="nucleotide sequence ID" value="NC_008312.1"/>
</dbReference>
<dbReference type="SMR" id="Q113K0"/>
<dbReference type="STRING" id="203124.Tery_2083"/>
<dbReference type="KEGG" id="ter:Tery_2083"/>
<dbReference type="eggNOG" id="COG0756">
    <property type="taxonomic scope" value="Bacteria"/>
</dbReference>
<dbReference type="HOGENOM" id="CLU_068508_1_2_3"/>
<dbReference type="OrthoDB" id="9809956at2"/>
<dbReference type="UniPathway" id="UPA00610">
    <property type="reaction ID" value="UER00666"/>
</dbReference>
<dbReference type="GO" id="GO:0004170">
    <property type="term" value="F:dUTP diphosphatase activity"/>
    <property type="evidence" value="ECO:0007669"/>
    <property type="project" value="UniProtKB-UniRule"/>
</dbReference>
<dbReference type="GO" id="GO:0000287">
    <property type="term" value="F:magnesium ion binding"/>
    <property type="evidence" value="ECO:0007669"/>
    <property type="project" value="UniProtKB-UniRule"/>
</dbReference>
<dbReference type="GO" id="GO:0006226">
    <property type="term" value="P:dUMP biosynthetic process"/>
    <property type="evidence" value="ECO:0007669"/>
    <property type="project" value="UniProtKB-UniRule"/>
</dbReference>
<dbReference type="GO" id="GO:0046081">
    <property type="term" value="P:dUTP catabolic process"/>
    <property type="evidence" value="ECO:0007669"/>
    <property type="project" value="InterPro"/>
</dbReference>
<dbReference type="CDD" id="cd07557">
    <property type="entry name" value="trimeric_dUTPase"/>
    <property type="match status" value="1"/>
</dbReference>
<dbReference type="Gene3D" id="2.70.40.10">
    <property type="match status" value="1"/>
</dbReference>
<dbReference type="HAMAP" id="MF_00116">
    <property type="entry name" value="dUTPase_bact"/>
    <property type="match status" value="1"/>
</dbReference>
<dbReference type="InterPro" id="IPR008181">
    <property type="entry name" value="dUTPase"/>
</dbReference>
<dbReference type="InterPro" id="IPR029054">
    <property type="entry name" value="dUTPase-like"/>
</dbReference>
<dbReference type="InterPro" id="IPR036157">
    <property type="entry name" value="dUTPase-like_sf"/>
</dbReference>
<dbReference type="InterPro" id="IPR033704">
    <property type="entry name" value="dUTPase_trimeric"/>
</dbReference>
<dbReference type="NCBIfam" id="TIGR00576">
    <property type="entry name" value="dut"/>
    <property type="match status" value="1"/>
</dbReference>
<dbReference type="NCBIfam" id="NF001862">
    <property type="entry name" value="PRK00601.1"/>
    <property type="match status" value="1"/>
</dbReference>
<dbReference type="PANTHER" id="PTHR11241">
    <property type="entry name" value="DEOXYURIDINE 5'-TRIPHOSPHATE NUCLEOTIDOHYDROLASE"/>
    <property type="match status" value="1"/>
</dbReference>
<dbReference type="PANTHER" id="PTHR11241:SF0">
    <property type="entry name" value="DEOXYURIDINE 5'-TRIPHOSPHATE NUCLEOTIDOHYDROLASE"/>
    <property type="match status" value="1"/>
</dbReference>
<dbReference type="Pfam" id="PF00692">
    <property type="entry name" value="dUTPase"/>
    <property type="match status" value="1"/>
</dbReference>
<dbReference type="SUPFAM" id="SSF51283">
    <property type="entry name" value="dUTPase-like"/>
    <property type="match status" value="1"/>
</dbReference>
<feature type="chain" id="PRO_1000076076" description="Deoxyuridine 5'-triphosphate nucleotidohydrolase">
    <location>
        <begin position="1"/>
        <end position="142"/>
    </location>
</feature>
<feature type="binding site" evidence="1">
    <location>
        <begin position="62"/>
        <end position="64"/>
    </location>
    <ligand>
        <name>substrate</name>
    </ligand>
</feature>
<feature type="binding site" evidence="1">
    <location>
        <position position="75"/>
    </location>
    <ligand>
        <name>substrate</name>
    </ligand>
</feature>
<feature type="binding site" evidence="1">
    <location>
        <begin position="79"/>
        <end position="81"/>
    </location>
    <ligand>
        <name>substrate</name>
    </ligand>
</feature>
<sequence length="142" mass="15500">MKLKIKKLDELAIIPFYAHKGDAGLDLFSIDESTINPGESKLIHTGISIELPSGTEAQIRPRSGLALKHQITVLNTPGTIDETYRGEIGIILINHGKNSFQVTKRMKIAQMVITSVLSVKVEEVNQLSTTQRDINGFGSTGT</sequence>